<dbReference type="EC" id="2.2.1.2" evidence="2"/>
<dbReference type="EMBL" id="CP000316">
    <property type="protein sequence ID" value="ABE42708.1"/>
    <property type="molecule type" value="Genomic_DNA"/>
</dbReference>
<dbReference type="RefSeq" id="WP_011481711.1">
    <property type="nucleotide sequence ID" value="NC_007948.1"/>
</dbReference>
<dbReference type="SMR" id="Q12FI4"/>
<dbReference type="STRING" id="296591.Bpro_0752"/>
<dbReference type="KEGG" id="pol:Bpro_0752"/>
<dbReference type="eggNOG" id="COG0176">
    <property type="taxonomic scope" value="Bacteria"/>
</dbReference>
<dbReference type="HOGENOM" id="CLU_047470_0_1_4"/>
<dbReference type="OrthoDB" id="9809101at2"/>
<dbReference type="UniPathway" id="UPA00115">
    <property type="reaction ID" value="UER00414"/>
</dbReference>
<dbReference type="Proteomes" id="UP000001983">
    <property type="component" value="Chromosome"/>
</dbReference>
<dbReference type="GO" id="GO:0005737">
    <property type="term" value="C:cytoplasm"/>
    <property type="evidence" value="ECO:0007669"/>
    <property type="project" value="UniProtKB-SubCell"/>
</dbReference>
<dbReference type="GO" id="GO:0004801">
    <property type="term" value="F:transaldolase activity"/>
    <property type="evidence" value="ECO:0000250"/>
    <property type="project" value="UniProtKB"/>
</dbReference>
<dbReference type="GO" id="GO:0005975">
    <property type="term" value="P:carbohydrate metabolic process"/>
    <property type="evidence" value="ECO:0007669"/>
    <property type="project" value="InterPro"/>
</dbReference>
<dbReference type="GO" id="GO:0009052">
    <property type="term" value="P:pentose-phosphate shunt, non-oxidative branch"/>
    <property type="evidence" value="ECO:0007669"/>
    <property type="project" value="TreeGrafter"/>
</dbReference>
<dbReference type="CDD" id="cd00957">
    <property type="entry name" value="Transaldolase_TalAB"/>
    <property type="match status" value="1"/>
</dbReference>
<dbReference type="FunFam" id="3.20.20.70:FF:000002">
    <property type="entry name" value="Transaldolase"/>
    <property type="match status" value="1"/>
</dbReference>
<dbReference type="Gene3D" id="3.20.20.70">
    <property type="entry name" value="Aldolase class I"/>
    <property type="match status" value="1"/>
</dbReference>
<dbReference type="HAMAP" id="MF_00492">
    <property type="entry name" value="Transaldolase_1"/>
    <property type="match status" value="1"/>
</dbReference>
<dbReference type="InterPro" id="IPR013785">
    <property type="entry name" value="Aldolase_TIM"/>
</dbReference>
<dbReference type="InterPro" id="IPR001585">
    <property type="entry name" value="TAL/FSA"/>
</dbReference>
<dbReference type="InterPro" id="IPR004730">
    <property type="entry name" value="Transaldolase_1"/>
</dbReference>
<dbReference type="InterPro" id="IPR018225">
    <property type="entry name" value="Transaldolase_AS"/>
</dbReference>
<dbReference type="NCBIfam" id="TIGR00874">
    <property type="entry name" value="talAB"/>
    <property type="match status" value="1"/>
</dbReference>
<dbReference type="PANTHER" id="PTHR10683">
    <property type="entry name" value="TRANSALDOLASE"/>
    <property type="match status" value="1"/>
</dbReference>
<dbReference type="PANTHER" id="PTHR10683:SF18">
    <property type="entry name" value="TRANSALDOLASE"/>
    <property type="match status" value="1"/>
</dbReference>
<dbReference type="Pfam" id="PF00923">
    <property type="entry name" value="TAL_FSA"/>
    <property type="match status" value="1"/>
</dbReference>
<dbReference type="SUPFAM" id="SSF51569">
    <property type="entry name" value="Aldolase"/>
    <property type="match status" value="1"/>
</dbReference>
<dbReference type="PROSITE" id="PS01054">
    <property type="entry name" value="TRANSALDOLASE_1"/>
    <property type="match status" value="1"/>
</dbReference>
<dbReference type="PROSITE" id="PS00958">
    <property type="entry name" value="TRANSALDOLASE_2"/>
    <property type="match status" value="1"/>
</dbReference>
<accession>Q12FI4</accession>
<name>TAL_POLSJ</name>
<organism>
    <name type="scientific">Polaromonas sp. (strain JS666 / ATCC BAA-500)</name>
    <dbReference type="NCBI Taxonomy" id="296591"/>
    <lineage>
        <taxon>Bacteria</taxon>
        <taxon>Pseudomonadati</taxon>
        <taxon>Pseudomonadota</taxon>
        <taxon>Betaproteobacteria</taxon>
        <taxon>Burkholderiales</taxon>
        <taxon>Comamonadaceae</taxon>
        <taxon>Polaromonas</taxon>
    </lineage>
</organism>
<reference key="1">
    <citation type="journal article" date="2008" name="Appl. Environ. Microbiol.">
        <title>The genome of Polaromonas sp. strain JS666: insights into the evolution of a hydrocarbon- and xenobiotic-degrading bacterium, and features of relevance to biotechnology.</title>
        <authorList>
            <person name="Mattes T.E."/>
            <person name="Alexander A.K."/>
            <person name="Richardson P.M."/>
            <person name="Munk A.C."/>
            <person name="Han C.S."/>
            <person name="Stothard P."/>
            <person name="Coleman N.V."/>
        </authorList>
    </citation>
    <scope>NUCLEOTIDE SEQUENCE [LARGE SCALE GENOMIC DNA]</scope>
    <source>
        <strain>JS666 / ATCC BAA-500</strain>
    </source>
</reference>
<sequence length="315" mass="34429">MNQLESLKQFTTVVADTGDFRQLGQFKPQDATTNPSLILKAVQKADYQPLLKETVARFKGRALDEVMDRLLVRFGCEILSIIPGRVSTEVDARLSFDANASYTRGERIVELYQAEGIHIDRVLIKVAATWEGIQAAERLERRGIHTNLTLLFSFCQAVACGQARVQLISPFVGRIYDWYKKSAGAAWDEAANAGANDPGVKSVRQIYNHYKHFGIATEVMGASFRNAGQITALAGCDLLTISPELLAQLAASEAPLARSLDAGAARSLDLPAVNYDETGFRYALNEDAMATEKLAEGIRAFAADAIKLEQLMVAA</sequence>
<gene>
    <name evidence="2" type="primary">tal</name>
    <name type="ordered locus">Bpro_0752</name>
</gene>
<comment type="function">
    <text evidence="2">Transaldolase is important for the balance of metabolites in the pentose-phosphate pathway.</text>
</comment>
<comment type="catalytic activity">
    <reaction evidence="2">
        <text>D-sedoheptulose 7-phosphate + D-glyceraldehyde 3-phosphate = D-erythrose 4-phosphate + beta-D-fructose 6-phosphate</text>
        <dbReference type="Rhea" id="RHEA:17053"/>
        <dbReference type="ChEBI" id="CHEBI:16897"/>
        <dbReference type="ChEBI" id="CHEBI:57483"/>
        <dbReference type="ChEBI" id="CHEBI:57634"/>
        <dbReference type="ChEBI" id="CHEBI:59776"/>
        <dbReference type="EC" id="2.2.1.2"/>
    </reaction>
</comment>
<comment type="pathway">
    <text evidence="2">Carbohydrate degradation; pentose phosphate pathway; D-glyceraldehyde 3-phosphate and beta-D-fructose 6-phosphate from D-ribose 5-phosphate and D-xylulose 5-phosphate (non-oxidative stage): step 2/3.</text>
</comment>
<comment type="subunit">
    <text evidence="1">Homodimer.</text>
</comment>
<comment type="subcellular location">
    <subcellularLocation>
        <location evidence="2">Cytoplasm</location>
    </subcellularLocation>
</comment>
<comment type="similarity">
    <text evidence="2">Belongs to the transaldolase family. Type 1 subfamily.</text>
</comment>
<evidence type="ECO:0000250" key="1"/>
<evidence type="ECO:0000255" key="2">
    <source>
        <dbReference type="HAMAP-Rule" id="MF_00492"/>
    </source>
</evidence>
<proteinExistence type="inferred from homology"/>
<keyword id="KW-0963">Cytoplasm</keyword>
<keyword id="KW-0570">Pentose shunt</keyword>
<keyword id="KW-1185">Reference proteome</keyword>
<keyword id="KW-0704">Schiff base</keyword>
<keyword id="KW-0808">Transferase</keyword>
<feature type="chain" id="PRO_1000014506" description="Transaldolase">
    <location>
        <begin position="1"/>
        <end position="315"/>
    </location>
</feature>
<feature type="active site" description="Schiff-base intermediate with substrate" evidence="2">
    <location>
        <position position="125"/>
    </location>
</feature>
<protein>
    <recommendedName>
        <fullName evidence="2">Transaldolase</fullName>
        <ecNumber evidence="2">2.2.1.2</ecNumber>
    </recommendedName>
</protein>